<dbReference type="EC" id="2.1.1.-" evidence="1 2 3 4"/>
<dbReference type="PDB" id="5N0N">
    <property type="method" value="X-ray"/>
    <property type="resolution" value="1.76 A"/>
    <property type="chains" value="A=1-410"/>
</dbReference>
<dbReference type="PDB" id="5N0O">
    <property type="method" value="X-ray"/>
    <property type="resolution" value="1.44 A"/>
    <property type="chains" value="A/B=1-398"/>
</dbReference>
<dbReference type="PDB" id="5N0P">
    <property type="method" value="X-ray"/>
    <property type="resolution" value="2.16 A"/>
    <property type="chains" value="A/B=1-398"/>
</dbReference>
<dbReference type="PDB" id="5N0Q">
    <property type="method" value="X-ray"/>
    <property type="resolution" value="2.40 A"/>
    <property type="chains" value="A/B=1-410"/>
</dbReference>
<dbReference type="PDB" id="5N0R">
    <property type="method" value="X-ray"/>
    <property type="resolution" value="1.61 A"/>
    <property type="chains" value="A=1-410"/>
</dbReference>
<dbReference type="PDB" id="5N0S">
    <property type="method" value="X-ray"/>
    <property type="resolution" value="1.95 A"/>
    <property type="chains" value="A/B=1-410"/>
</dbReference>
<dbReference type="PDB" id="5N0T">
    <property type="method" value="X-ray"/>
    <property type="resolution" value="1.78 A"/>
    <property type="chains" value="A/B=1-410"/>
</dbReference>
<dbReference type="PDB" id="5N0U">
    <property type="method" value="X-ray"/>
    <property type="resolution" value="1.68 A"/>
    <property type="chains" value="A=1-410"/>
</dbReference>
<dbReference type="PDB" id="5N0V">
    <property type="method" value="X-ray"/>
    <property type="resolution" value="1.91 A"/>
    <property type="chains" value="A/B=1-410"/>
</dbReference>
<dbReference type="PDB" id="5N0W">
    <property type="method" value="X-ray"/>
    <property type="resolution" value="1.93 A"/>
    <property type="chains" value="A/B=1-410"/>
</dbReference>
<dbReference type="PDB" id="5N0X">
    <property type="method" value="X-ray"/>
    <property type="resolution" value="1.67 A"/>
    <property type="chains" value="A/B=1-410"/>
</dbReference>
<dbReference type="PDB" id="5N4I">
    <property type="method" value="X-ray"/>
    <property type="resolution" value="1.59 A"/>
    <property type="chains" value="A=1-410"/>
</dbReference>
<dbReference type="PDB" id="5OUF">
    <property type="method" value="X-ray"/>
    <property type="resolution" value="1.70 A"/>
    <property type="chains" value="A=1-410"/>
</dbReference>
<dbReference type="PDB" id="6GEW">
    <property type="method" value="X-ray"/>
    <property type="resolution" value="2.10 A"/>
    <property type="chains" value="A=1-410"/>
</dbReference>
<dbReference type="PDB" id="6QZY">
    <property type="method" value="X-ray"/>
    <property type="resolution" value="1.61 A"/>
    <property type="chains" value="A=1-410, B=395-410"/>
</dbReference>
<dbReference type="PDB" id="6QZZ">
    <property type="method" value="X-ray"/>
    <property type="resolution" value="1.85 A"/>
    <property type="chains" value="A/B=1-410"/>
</dbReference>
<dbReference type="PDB" id="6R00">
    <property type="method" value="X-ray"/>
    <property type="resolution" value="1.74 A"/>
    <property type="chains" value="A=1-410, B=397-410"/>
</dbReference>
<dbReference type="PDB" id="6TSC">
    <property type="method" value="X-ray"/>
    <property type="resolution" value="2.19 A"/>
    <property type="chains" value="A=1-410, B=396-407"/>
</dbReference>
<dbReference type="PDB" id="8QAQ">
    <property type="method" value="NMR"/>
    <property type="chains" value="Z=400-411"/>
</dbReference>
<dbReference type="PDB" id="8QAS">
    <property type="method" value="NMR"/>
    <property type="chains" value="Z=400-411"/>
</dbReference>
<dbReference type="PDB" id="8QBP">
    <property type="method" value="NMR"/>
    <property type="chains" value="Z=400-411"/>
</dbReference>
<dbReference type="PDBsum" id="5N0N"/>
<dbReference type="PDBsum" id="5N0O"/>
<dbReference type="PDBsum" id="5N0P"/>
<dbReference type="PDBsum" id="5N0Q"/>
<dbReference type="PDBsum" id="5N0R"/>
<dbReference type="PDBsum" id="5N0S"/>
<dbReference type="PDBsum" id="5N0T"/>
<dbReference type="PDBsum" id="5N0U"/>
<dbReference type="PDBsum" id="5N0V"/>
<dbReference type="PDBsum" id="5N0W"/>
<dbReference type="PDBsum" id="5N0X"/>
<dbReference type="PDBsum" id="5N4I"/>
<dbReference type="PDBsum" id="5OUF"/>
<dbReference type="PDBsum" id="6GEW"/>
<dbReference type="PDBsum" id="6QZY"/>
<dbReference type="PDBsum" id="6QZZ"/>
<dbReference type="PDBsum" id="6R00"/>
<dbReference type="PDBsum" id="6TSC"/>
<dbReference type="PDBsum" id="8QAQ"/>
<dbReference type="PDBsum" id="8QAS"/>
<dbReference type="PDBsum" id="8QBP"/>
<dbReference type="SMR" id="A0A2R2JFI5"/>
<dbReference type="iPTMnet" id="A0A2R2JFI5"/>
<dbReference type="BioCyc" id="MetaCyc:MONOMER-21248"/>
<dbReference type="GO" id="GO:0008168">
    <property type="term" value="F:methyltransferase activity"/>
    <property type="evidence" value="ECO:0007669"/>
    <property type="project" value="UniProtKB-KW"/>
</dbReference>
<dbReference type="GO" id="GO:0032259">
    <property type="term" value="P:methylation"/>
    <property type="evidence" value="ECO:0007669"/>
    <property type="project" value="UniProtKB-KW"/>
</dbReference>
<dbReference type="CDD" id="cd19916">
    <property type="entry name" value="OphMA_like"/>
    <property type="match status" value="1"/>
</dbReference>
<dbReference type="Gene3D" id="3.40.1010.10">
    <property type="entry name" value="Cobalt-precorrin-4 Transmethylase, Domain 1"/>
    <property type="match status" value="1"/>
</dbReference>
<dbReference type="InterPro" id="IPR000878">
    <property type="entry name" value="4pyrrol_Mease"/>
</dbReference>
<dbReference type="InterPro" id="IPR035996">
    <property type="entry name" value="4pyrrol_Methylase_sf"/>
</dbReference>
<dbReference type="InterPro" id="IPR014777">
    <property type="entry name" value="4pyrrole_Mease_sub1"/>
</dbReference>
<dbReference type="NCBIfam" id="NF038374">
    <property type="entry name" value="omphalotin_tail"/>
    <property type="match status" value="1"/>
</dbReference>
<dbReference type="Pfam" id="PF00590">
    <property type="entry name" value="TP_methylase"/>
    <property type="match status" value="1"/>
</dbReference>
<dbReference type="SUPFAM" id="SSF53790">
    <property type="entry name" value="Tetrapyrrole methylase"/>
    <property type="match status" value="1"/>
</dbReference>
<gene>
    <name evidence="6" type="primary">ophMA</name>
</gene>
<evidence type="ECO:0000269" key="1">
    <source>
    </source>
</evidence>
<evidence type="ECO:0000269" key="2">
    <source>
    </source>
</evidence>
<evidence type="ECO:0000269" key="3">
    <source>
    </source>
</evidence>
<evidence type="ECO:0000269" key="4">
    <source>
    </source>
</evidence>
<evidence type="ECO:0000269" key="5">
    <source>
    </source>
</evidence>
<evidence type="ECO:0000303" key="6">
    <source>
    </source>
</evidence>
<evidence type="ECO:0000305" key="7"/>
<evidence type="ECO:0007744" key="8">
    <source>
        <dbReference type="PDB" id="5N0N"/>
    </source>
</evidence>
<evidence type="ECO:0007744" key="9">
    <source>
        <dbReference type="PDB" id="5N0O"/>
    </source>
</evidence>
<evidence type="ECO:0007744" key="10">
    <source>
        <dbReference type="PDB" id="5N0P"/>
    </source>
</evidence>
<evidence type="ECO:0007744" key="11">
    <source>
        <dbReference type="PDB" id="5N0Q"/>
    </source>
</evidence>
<evidence type="ECO:0007744" key="12">
    <source>
        <dbReference type="PDB" id="5N0R"/>
    </source>
</evidence>
<evidence type="ECO:0007744" key="13">
    <source>
        <dbReference type="PDB" id="5N0S"/>
    </source>
</evidence>
<evidence type="ECO:0007744" key="14">
    <source>
        <dbReference type="PDB" id="5N0T"/>
    </source>
</evidence>
<evidence type="ECO:0007744" key="15">
    <source>
        <dbReference type="PDB" id="5N0U"/>
    </source>
</evidence>
<evidence type="ECO:0007744" key="16">
    <source>
        <dbReference type="PDB" id="5N0V"/>
    </source>
</evidence>
<evidence type="ECO:0007744" key="17">
    <source>
        <dbReference type="PDB" id="5N0W"/>
    </source>
</evidence>
<evidence type="ECO:0007744" key="18">
    <source>
        <dbReference type="PDB" id="5N0X"/>
    </source>
</evidence>
<evidence type="ECO:0007744" key="19">
    <source>
        <dbReference type="PDB" id="5N4I"/>
    </source>
</evidence>
<evidence type="ECO:0007744" key="20">
    <source>
        <dbReference type="PDB" id="6GEW"/>
    </source>
</evidence>
<evidence type="ECO:0007744" key="21">
    <source>
        <dbReference type="PDB" id="6QZY"/>
    </source>
</evidence>
<evidence type="ECO:0007744" key="22">
    <source>
        <dbReference type="PDB" id="6QZZ"/>
    </source>
</evidence>
<evidence type="ECO:0007744" key="23">
    <source>
        <dbReference type="PDB" id="6R00"/>
    </source>
</evidence>
<evidence type="ECO:0007744" key="24">
    <source>
        <dbReference type="PDB" id="6TSC"/>
    </source>
</evidence>
<evidence type="ECO:0007829" key="25">
    <source>
        <dbReference type="PDB" id="5N0O"/>
    </source>
</evidence>
<evidence type="ECO:0007829" key="26">
    <source>
        <dbReference type="PDB" id="5N0P"/>
    </source>
</evidence>
<evidence type="ECO:0007829" key="27">
    <source>
        <dbReference type="PDB" id="5N0R"/>
    </source>
</evidence>
<evidence type="ECO:0007829" key="28">
    <source>
        <dbReference type="PDB" id="5N0S"/>
    </source>
</evidence>
<evidence type="ECO:0007829" key="29">
    <source>
        <dbReference type="PDB" id="6R00"/>
    </source>
</evidence>
<evidence type="ECO:0007829" key="30">
    <source>
        <dbReference type="PDB" id="8QAQ"/>
    </source>
</evidence>
<feature type="chain" id="PRO_0000458493" description="N-methyltranferase ophM" evidence="1">
    <location>
        <begin position="1"/>
        <end position="399"/>
    </location>
</feature>
<feature type="peptide" id="PRO_0000458494" description="Ribosomally synthesized omphalotin core peptide" evidence="1">
    <location>
        <begin position="400"/>
        <end position="411"/>
    </location>
</feature>
<feature type="peptide" id="PRO_0000458495" description="Follower peptide" evidence="1">
    <location>
        <begin position="412"/>
        <end position="417"/>
    </location>
</feature>
<feature type="region of interest" description="Methyltransferase domain" evidence="1">
    <location>
        <begin position="1"/>
        <end position="251"/>
    </location>
</feature>
<feature type="region of interest" description="Clasp domain" evidence="1">
    <location>
        <begin position="252"/>
        <end position="378"/>
    </location>
</feature>
<feature type="region of interest" description="Precursor leader" evidence="1">
    <location>
        <begin position="379"/>
        <end position="399"/>
    </location>
</feature>
<feature type="active site" evidence="2">
    <location>
        <position position="72"/>
    </location>
</feature>
<feature type="active site" evidence="2">
    <location>
        <position position="76"/>
    </location>
</feature>
<feature type="active site" evidence="2">
    <location>
        <position position="98"/>
    </location>
</feature>
<feature type="binding site" evidence="2 10 14 15">
    <location>
        <position position="98"/>
    </location>
    <ligand>
        <name>S-adenosyl-L-methionine</name>
        <dbReference type="ChEBI" id="CHEBI:59789"/>
    </ligand>
</feature>
<feature type="binding site" evidence="2 9 10 11 12 13 14 15 16 17 18 19 20 21 22 23 24">
    <location>
        <position position="100"/>
    </location>
    <ligand>
        <name>S-adenosyl-L-methionine</name>
        <dbReference type="ChEBI" id="CHEBI:59789"/>
    </ligand>
</feature>
<feature type="binding site" evidence="2 9 11 12 13 14 17 18 19 21 22">
    <location>
        <position position="103"/>
    </location>
    <ligand>
        <name>S-adenosyl-L-methionine</name>
        <dbReference type="ChEBI" id="CHEBI:59789"/>
    </ligand>
</feature>
<feature type="binding site" evidence="2 9 10 11 12 13 14 15 16 17 18 19 20 21 22 23 24">
    <location>
        <position position="130"/>
    </location>
    <ligand>
        <name>S-adenosyl-L-methionine</name>
        <dbReference type="ChEBI" id="CHEBI:59789"/>
    </ligand>
</feature>
<feature type="binding site" evidence="2 9 10 12 13 14 15 16 17 18 19 20 21 22 23 24">
    <location>
        <position position="172"/>
    </location>
    <ligand>
        <name>S-adenosyl-L-methionine</name>
        <dbReference type="ChEBI" id="CHEBI:59789"/>
    </ligand>
</feature>
<feature type="binding site" evidence="2 9 10 11 12 13 14 15 16 17 18 19 20 21 22 23 24">
    <location>
        <position position="213"/>
    </location>
    <ligand>
        <name>S-adenosyl-L-methionine</name>
        <dbReference type="ChEBI" id="CHEBI:59789"/>
    </ligand>
</feature>
<feature type="binding site" evidence="2 10 11 20">
    <location>
        <position position="244"/>
    </location>
    <ligand>
        <name>S-adenosyl-L-methionine</name>
        <dbReference type="ChEBI" id="CHEBI:59789"/>
    </ligand>
</feature>
<feature type="binding site" evidence="2 9 10 11 12 13 14 15 16 17 18 19 20 21 22 23 24">
    <location>
        <position position="245"/>
    </location>
    <ligand>
        <name>S-adenosyl-L-methionine</name>
        <dbReference type="ChEBI" id="CHEBI:59789"/>
    </ligand>
</feature>
<feature type="modified residue" description="N-methylvaline" evidence="1 2 3 4">
    <location>
        <position position="401"/>
    </location>
</feature>
<feature type="modified residue" description="N-methylvaline" evidence="1 2 3 4">
    <location>
        <position position="403"/>
    </location>
</feature>
<feature type="modified residue" description="N-methylvaline" evidence="1 2 3 4">
    <location>
        <position position="404"/>
    </location>
</feature>
<feature type="modified residue" description="N-methylglycine" evidence="1 2 3 4">
    <location>
        <position position="405"/>
    </location>
</feature>
<feature type="modified residue" description="N-methylvaline" evidence="1 2 3 4">
    <location>
        <position position="406"/>
    </location>
</feature>
<feature type="modified residue" description="N-methylisoleucine" evidence="1 2 3 4">
    <location>
        <position position="407"/>
    </location>
</feature>
<feature type="modified residue" description="N-methylglycine" evidence="1 2 3 4">
    <location>
        <position position="408"/>
    </location>
</feature>
<feature type="modified residue" description="N-methylisoleucine" evidence="1 2 3 4">
    <location>
        <position position="410"/>
    </location>
</feature>
<feature type="modified residue" description="N-methylglycine" evidence="1 2 3 4">
    <location>
        <position position="411"/>
    </location>
</feature>
<feature type="modified residue" description="N-methylvaline" evidence="1 2 3 4">
    <location>
        <position position="413"/>
    </location>
</feature>
<feature type="mutagenesis site" description="Impairs methylation activity." evidence="2">
    <original>R</original>
    <variation>A</variation>
    <variation>K</variation>
    <location>
        <position position="72"/>
    </location>
</feature>
<feature type="mutagenesis site" description="Impairs methylation activity." evidence="2">
    <original>Y</original>
    <variation>F</variation>
    <location>
        <position position="76"/>
    </location>
</feature>
<feature type="mutagenesis site" description="Impairs methylation activity." evidence="2">
    <original>Y</original>
    <variation>F</variation>
    <variation>A</variation>
    <location>
        <position position="98"/>
    </location>
</feature>
<feature type="strand" evidence="25">
    <location>
        <begin position="11"/>
        <end position="16"/>
    </location>
</feature>
<feature type="strand" evidence="25">
    <location>
        <begin position="18"/>
        <end position="20"/>
    </location>
</feature>
<feature type="turn" evidence="25">
    <location>
        <begin position="21"/>
        <end position="24"/>
    </location>
</feature>
<feature type="helix" evidence="25">
    <location>
        <begin position="27"/>
        <end position="35"/>
    </location>
</feature>
<feature type="strand" evidence="25">
    <location>
        <begin position="37"/>
        <end position="42"/>
    </location>
</feature>
<feature type="helix" evidence="25">
    <location>
        <begin position="46"/>
        <end position="55"/>
    </location>
</feature>
<feature type="strand" evidence="25">
    <location>
        <begin position="57"/>
        <end position="61"/>
    </location>
</feature>
<feature type="helix" evidence="25">
    <location>
        <begin position="62"/>
        <end position="65"/>
    </location>
</feature>
<feature type="helix" evidence="25">
    <location>
        <begin position="72"/>
        <end position="88"/>
    </location>
</feature>
<feature type="strand" evidence="25">
    <location>
        <begin position="92"/>
        <end position="100"/>
    </location>
</feature>
<feature type="helix" evidence="25">
    <location>
        <begin position="106"/>
        <end position="117"/>
    </location>
</feature>
<feature type="strand" evidence="25">
    <location>
        <begin position="121"/>
        <end position="124"/>
    </location>
</feature>
<feature type="helix" evidence="25">
    <location>
        <begin position="130"/>
        <end position="138"/>
    </location>
</feature>
<feature type="turn" evidence="25">
    <location>
        <begin position="142"/>
        <end position="145"/>
    </location>
</feature>
<feature type="strand" evidence="25">
    <location>
        <begin position="147"/>
        <end position="151"/>
    </location>
</feature>
<feature type="helix" evidence="25">
    <location>
        <begin position="152"/>
        <end position="157"/>
    </location>
</feature>
<feature type="strand" evidence="25">
    <location>
        <begin position="166"/>
        <end position="171"/>
    </location>
</feature>
<feature type="helix" evidence="29">
    <location>
        <begin position="173"/>
        <end position="175"/>
    </location>
</feature>
<feature type="helix" evidence="25">
    <location>
        <begin position="191"/>
        <end position="202"/>
    </location>
</feature>
<feature type="strand" evidence="25">
    <location>
        <begin position="206"/>
        <end position="212"/>
    </location>
</feature>
<feature type="strand" evidence="25">
    <location>
        <begin position="222"/>
        <end position="227"/>
    </location>
</feature>
<feature type="helix" evidence="25">
    <location>
        <begin position="229"/>
        <end position="232"/>
    </location>
</feature>
<feature type="helix" evidence="25">
    <location>
        <begin position="234"/>
        <end position="237"/>
    </location>
</feature>
<feature type="strand" evidence="25">
    <location>
        <begin position="245"/>
        <end position="248"/>
    </location>
</feature>
<feature type="helix" evidence="25">
    <location>
        <begin position="258"/>
        <end position="264"/>
    </location>
</feature>
<feature type="strand" evidence="27">
    <location>
        <begin position="268"/>
        <end position="270"/>
    </location>
</feature>
<feature type="strand" evidence="26">
    <location>
        <begin position="286"/>
        <end position="288"/>
    </location>
</feature>
<feature type="helix" evidence="25">
    <location>
        <begin position="297"/>
        <end position="304"/>
    </location>
</feature>
<feature type="helix" evidence="25">
    <location>
        <begin position="305"/>
        <end position="308"/>
    </location>
</feature>
<feature type="helix" evidence="25">
    <location>
        <begin position="322"/>
        <end position="333"/>
    </location>
</feature>
<feature type="helix" evidence="25">
    <location>
        <begin position="335"/>
        <end position="343"/>
    </location>
</feature>
<feature type="helix" evidence="25">
    <location>
        <begin position="345"/>
        <end position="351"/>
    </location>
</feature>
<feature type="helix" evidence="25">
    <location>
        <begin position="357"/>
        <end position="365"/>
    </location>
</feature>
<feature type="helix" evidence="25">
    <location>
        <begin position="368"/>
        <end position="375"/>
    </location>
</feature>
<feature type="helix" evidence="25">
    <location>
        <begin position="381"/>
        <end position="384"/>
    </location>
</feature>
<feature type="strand" evidence="28">
    <location>
        <begin position="389"/>
        <end position="391"/>
    </location>
</feature>
<feature type="strand" evidence="30">
    <location>
        <begin position="402"/>
        <end position="404"/>
    </location>
</feature>
<feature type="turn" evidence="29">
    <location>
        <begin position="407"/>
        <end position="409"/>
    </location>
</feature>
<proteinExistence type="evidence at protein level"/>
<comment type="function">
    <text evidence="1 2 3 4">Fusion protein of the methyltransferase ophM and the omphalotin core peptide; part of the gene cluster that mediates the biosynthesis of omphalotin A, a highly methylated cyclic dodecapeptide with nematodicidal activity (PubMed:28715095, PubMed:30151425, PubMed:32491837, PubMed:33574430). Omphalotin A derives from the C-terminus of the ophMA protein, and it is the ophMA protein that methylates its own C-terminus using S-adenosyl methionine (SAM) (PubMed:28715095, PubMed:30151425, PubMed:32491837, PubMed:33574430). The C-terminus is subsequently cleaved off and macrocyclized by the prolyloligopeptidase ophP to give the final product (PubMed:28715095, PubMed:30151425, PubMed:32491837).</text>
</comment>
<comment type="pathway">
    <text evidence="1 2 3">Mycotoxin biosynthesis.</text>
</comment>
<comment type="subunit">
    <text evidence="2">Homodimer.</text>
</comment>
<comment type="domain">
    <text evidence="2 3">Within the homodimer, the clasp domain wraps around the adjacent subunit to position the core peptide into the other subunit's active site for iterative intermolecular methylation.</text>
</comment>
<comment type="PTM">
    <text evidence="1 2 3 4 5 7">OphMA automethylates at Val-401, Val-403, Val-404, Gly-405, Val-406, Ile-407, Gly-408, Ile-410, Gly-411 and Val-413 before being processed by the prolyloligopeptidase ophP which likely forms a peptidyl ester upon removal of the follower propeptide, which then undergoes macrocyclization with the N-terminus of the modified core peptide (PubMed:28715095, PubMed:30151425, PubMed:32491837, PubMed:33574430, PubMed:36220874). Peptide backbone alpha-N-methylations change the physicochemical properties of amide bonds to provide structural constraints and other favorable characteristics including biological membrane permeability to peptides (Probable).</text>
</comment>
<comment type="biotechnology">
    <text evidence="4">Omphalotins display strong and selective activity against the plant-pathogenic nematode Meloidogyne incognita but shows no further phytotoxic, antibacterial, or antifungal activities.</text>
</comment>
<comment type="similarity">
    <text evidence="7">In the N-terminal section; belongs to the precorrin methyltransferase family.</text>
</comment>
<comment type="online information" name="Protein Spotlight">
    <link uri="https://www.proteinspotlight.org/back_issues/262/"/>
    <text>Self-reliant - Issue 262 of October 2023</text>
</comment>
<protein>
    <recommendedName>
        <fullName evidence="6">Methyltransferase/ribosomally synthesized cyclic peptide omphalotin A precursor ophMA</fullName>
    </recommendedName>
    <alternativeName>
        <fullName evidence="6">Omphalotin A biosynthesis cluster protein MA</fullName>
    </alternativeName>
    <component>
        <recommendedName>
            <fullName evidence="6">N-methyltranferase ophM</fullName>
            <ecNumber evidence="1 2 3 4">2.1.1.-</ecNumber>
        </recommendedName>
    </component>
    <component>
        <recommendedName>
            <fullName evidence="6">Ribosomally synthesized omphalotin core peptide</fullName>
        </recommendedName>
    </component>
    <component>
        <recommendedName>
            <fullName evidence="6">Follower peptide</fullName>
        </recommendedName>
    </component>
</protein>
<name>OPHMA_OMPOL</name>
<organism>
    <name type="scientific">Omphalotus olearius</name>
    <name type="common">Jack o'lantern</name>
    <dbReference type="NCBI Taxonomy" id="72120"/>
    <lineage>
        <taxon>Eukaryota</taxon>
        <taxon>Fungi</taxon>
        <taxon>Dikarya</taxon>
        <taxon>Basidiomycota</taxon>
        <taxon>Agaricomycotina</taxon>
        <taxon>Agaricomycetes</taxon>
        <taxon>Agaricomycetidae</taxon>
        <taxon>Agaricales</taxon>
        <taxon>Marasmiineae</taxon>
        <taxon>Omphalotaceae</taxon>
        <taxon>Omphalotus</taxon>
    </lineage>
</organism>
<reference key="1">
    <citation type="journal article" date="2017" name="Angew. Chem. Int. Ed.">
        <title>A Self-sacrificing N-methyltransferase is the precursor of the fungal natural product omphalotin.</title>
        <authorList>
            <person name="Ramm S."/>
            <person name="Krawczyk B."/>
            <person name="Muehlenweg A."/>
            <person name="Poch A."/>
            <person name="Moesker E."/>
            <person name="Suessmuth R.D."/>
        </authorList>
    </citation>
    <scope>NUCLEOTIDE SEQUENCE [GENOMIC DNA]</scope>
    <scope>FUNCTION</scope>
    <scope>CATALYTIC ACTIVITY</scope>
    <scope>METHYLATION AT VAL-401; VAL-403; VAL-404; GLY-405; VAL-406; ILE-407; GLY-408; ILE-410; GLY-411 AND VAL-413</scope>
    <scope>PATHWAY</scope>
</reference>
<reference key="2">
    <citation type="journal article" date="2021" name="Sci. Rep.">
        <title>Identification, heterologous production and bioactivity of lentinulin A and dendrothelin A, two natural variants of backbone N-methylated peptide macrocycle omphalotin A.</title>
        <authorList>
            <person name="Matabaro E."/>
            <person name="Kaspar H."/>
            <person name="Dahlin P."/>
            <person name="Bader D.L.V."/>
            <person name="Murar C.E."/>
            <person name="Staubli F."/>
            <person name="Field C.M."/>
            <person name="Bode J.W."/>
            <person name="Kuenzler M."/>
        </authorList>
    </citation>
    <scope>FUNCTION</scope>
    <scope>CATALYTIC ACTIVITY</scope>
    <scope>METHYLATION AT VAL-401; VAL-403; VAL-404; GLY-405; VAL-406; ILE-407; GLY-408; ILE-410; GLY-411 AND VAL-413</scope>
    <scope>PATHWAY</scope>
    <scope>BIOTECHNOLOGY</scope>
</reference>
<reference key="3">
    <citation type="journal article" date="2022" name="Sci. Rep.">
        <title>Author Correction: Identification, heterologous production and bioactivity of lentinulin A and dendrothelin A, two natural variants of backbone N-methylated peptide macrocycle omphalotin A.</title>
        <authorList>
            <person name="Matabaro E."/>
            <person name="Kaspar H."/>
            <person name="Dahlin P."/>
            <person name="Bader D.L.V."/>
            <person name="Murar C.E."/>
            <person name="Staubli F."/>
            <person name="Field C.M."/>
            <person name="Bode J.W."/>
            <person name="Kuenzler M."/>
        </authorList>
    </citation>
    <scope>ERRATUM OF PUBMED:33574430</scope>
</reference>
<reference evidence="8 9 10 11 12 13 14 15 16 17 18" key="4">
    <citation type="journal article" date="2018" name="Sci. Adv.">
        <title>A molecular mechanism for the enzymatic methylation of nitrogen atoms within peptide bonds.</title>
        <authorList>
            <person name="Song H."/>
            <person name="van der Velden N.S."/>
            <person name="Shiran S.L."/>
            <person name="Bleiziffer P."/>
            <person name="Zach C."/>
            <person name="Sieber R."/>
            <person name="Imani A.S."/>
            <person name="Krausbeck F."/>
            <person name="Aebi M."/>
            <person name="Freeman M.F."/>
            <person name="Riniker S."/>
            <person name="Kunzler M."/>
            <person name="Naismith J.H."/>
        </authorList>
    </citation>
    <scope>X-RAY CRYSTALLOGRAPHY (1.44 ANGSTROMS)OF 3 TO 411 IN COMPLEX WITH S-ADENOSYL METHIONINE</scope>
    <scope>SUBUNIT</scope>
    <scope>FUNCTION</scope>
    <scope>CATALYTIC ACTIVITY</scope>
    <scope>ACTIVE SITE</scope>
    <scope>MUTAGENESIS OF ARG-72; TYR-76 AND TYR-98</scope>
    <scope>METHYLATION AT VAL-401; VAL-403; VAL-404; GLY-405; VAL-406; ILE-407; GLY-408; ILE-410; GLY-411 AND VAL-413</scope>
    <scope>PATHWAY</scope>
</reference>
<reference evidence="21 22 23 24" key="5">
    <citation type="journal article" date="2020" name="ACS Chem. Biol.">
        <title>Substrate plasticity of a fungal peptide alpha-N-methyltransferase.</title>
        <authorList>
            <person name="Song H."/>
            <person name="Fahrig-Kamarauskaite J.R."/>
            <person name="Matabaro E."/>
            <person name="Kaspar H."/>
            <person name="Shirran S.L."/>
            <person name="Zach C."/>
            <person name="Pace A."/>
            <person name="Stefanov B.A."/>
            <person name="Naismith J.H."/>
            <person name="Kunzler M."/>
        </authorList>
    </citation>
    <scope>X-RAY CRYSTALLOGRAPHY (1.61 ANGSTROMS) IN COMPLEX WITH S-ADENOSYL METHIONINE</scope>
    <scope>FUNCTION</scope>
    <scope>DOMAIN</scope>
    <scope>CATALYTIC ACTIVITY</scope>
    <scope>METHYLATION AT VAL-401; VAL-403; VAL-404; GLY-405; VAL-406; ILE-407; GLY-408; ILE-410; GLY-411 AND VAL-413</scope>
    <scope>PATHWAY</scope>
</reference>
<sequence length="417" mass="45790">METSTQTKAGSLTIVGTGIESIGQMTLQALSYIEAAAKVFYCVIDPATEAFILTKNKNCVDLYQYYDNGKSRLNTYTQMSELMVREVRKGLDVVGVFYGHPGVFVNPSHRALAIAKSEGYRARMLPGVSAEDCLFADLCIDPSNPGCLTYEASDFLIRDRPVSIHSHLVLFQVGCVGIADFNFTGFDNNKFGVLVDRLEQEYGAEHPVVHYIAAMMPHQDPVTDKYTVAQLREPEIAKRVGGVSTFYIPPKARKASNLDIIRRLELLPAGQVPDKKARIYPANQWEPDVPEVEPYRPSDQAAIAQLADHAPPEQYQPLATSKAMSDVMTKLALDPKALADYKADHRAFAQSVPDLTPQERAALELGDSWAIRCAMKNMPSSLLDAARESGEEASQNGFPWVIVVGVIGVIGSVMSTE</sequence>
<keyword id="KW-0002">3D-structure</keyword>
<keyword id="KW-0488">Methylation</keyword>
<keyword id="KW-0489">Methyltransferase</keyword>
<keyword id="KW-0949">S-adenosyl-L-methionine</keyword>
<keyword id="KW-0808">Transferase</keyword>
<keyword id="KW-0843">Virulence</keyword>
<accession>A0A2R2JFI5</accession>
<accession>A0A2R2JFH4</accession>
<accession>A0A2R2JFH7</accession>
<accession>A0A2R2JFH9</accession>
<accession>A0A2R2JFI0</accession>
<accession>A0A2R2JFI1</accession>
<accession>A0A2R2JFI2</accession>
<accession>A0A2R2JFI9</accession>